<gene>
    <name evidence="1" type="primary">fhs</name>
    <name type="ordered locus">CA_C3201</name>
</gene>
<organism>
    <name type="scientific">Clostridium acetobutylicum (strain ATCC 824 / DSM 792 / JCM 1419 / IAM 19013 / LMG 5710 / NBRC 13948 / NRRL B-527 / VKM B-1787 / 2291 / W)</name>
    <dbReference type="NCBI Taxonomy" id="272562"/>
    <lineage>
        <taxon>Bacteria</taxon>
        <taxon>Bacillati</taxon>
        <taxon>Bacillota</taxon>
        <taxon>Clostridia</taxon>
        <taxon>Eubacteriales</taxon>
        <taxon>Clostridiaceae</taxon>
        <taxon>Clostridium</taxon>
    </lineage>
</organism>
<sequence>MKTDIEIAQEAKMEPIVKIAEKIGLNEDDIDLYGKYKCKISLDVLKQNKNKQDGKLVLVTAINPTPAGEGKSTVTVGLGEALCKMNKNTVIALREPSLGPVFGIKGGAAGGGYAQVVPMEDINLHFTGDMHAITSANNLLCAAIDNHIHQGNSLKIDQRRIVFKRVMDMNDRALRSIVVGLGGKVNGFPREDGFMITVASEIMAILCLANDLMDLKERMGKILIAYDLDGNPVYCRDLKVEGAMAMLMKDAMKPNLVQTLENTPAIIHGGPFANIAHGCNSILATKMALKLGDYVITEAGFGADLGAEKFLDIKCRYGNLNPDCVVLVATIRALKHHGGALKEDLSKPNAKVLEKGLSNLGKQIENIKKYGVPVVVAINKFITDSEEEIKCIEEYCSKQGVKVSLTEVWEKGGEGGTDLANKVLDTLENEKSNFKYLYDEKLSIKEKMDIIAKEIYGADGVQYTPQANKQIKEIEKFNLDKLPICVAKTQYSLSDNPALLGRPTNFTINVKEVRVSNGAGFVVVQTGNIMTMPGLPKTPAANKMDIFEDGSIVGLF</sequence>
<dbReference type="EC" id="6.3.4.3" evidence="1"/>
<dbReference type="EMBL" id="AE001437">
    <property type="protein sequence ID" value="AAK81137.1"/>
    <property type="molecule type" value="Genomic_DNA"/>
</dbReference>
<dbReference type="PIR" id="F97293">
    <property type="entry name" value="F97293"/>
</dbReference>
<dbReference type="RefSeq" id="NP_349797.1">
    <property type="nucleotide sequence ID" value="NC_003030.1"/>
</dbReference>
<dbReference type="RefSeq" id="WP_010966477.1">
    <property type="nucleotide sequence ID" value="NC_003030.1"/>
</dbReference>
<dbReference type="SMR" id="Q97EB3"/>
<dbReference type="STRING" id="272562.CA_C3201"/>
<dbReference type="KEGG" id="cac:CA_C3201"/>
<dbReference type="PATRIC" id="fig|272562.8.peg.3380"/>
<dbReference type="eggNOG" id="COG2759">
    <property type="taxonomic scope" value="Bacteria"/>
</dbReference>
<dbReference type="HOGENOM" id="CLU_003601_3_3_9"/>
<dbReference type="OrthoDB" id="9761733at2"/>
<dbReference type="UniPathway" id="UPA00193"/>
<dbReference type="Proteomes" id="UP000000814">
    <property type="component" value="Chromosome"/>
</dbReference>
<dbReference type="GO" id="GO:0005524">
    <property type="term" value="F:ATP binding"/>
    <property type="evidence" value="ECO:0007669"/>
    <property type="project" value="UniProtKB-UniRule"/>
</dbReference>
<dbReference type="GO" id="GO:0004329">
    <property type="term" value="F:formate-tetrahydrofolate ligase activity"/>
    <property type="evidence" value="ECO:0007669"/>
    <property type="project" value="UniProtKB-UniRule"/>
</dbReference>
<dbReference type="GO" id="GO:0035999">
    <property type="term" value="P:tetrahydrofolate interconversion"/>
    <property type="evidence" value="ECO:0007669"/>
    <property type="project" value="UniProtKB-UniRule"/>
</dbReference>
<dbReference type="CDD" id="cd00477">
    <property type="entry name" value="FTHFS"/>
    <property type="match status" value="1"/>
</dbReference>
<dbReference type="FunFam" id="3.30.1510.10:FF:000001">
    <property type="entry name" value="Formate--tetrahydrofolate ligase"/>
    <property type="match status" value="1"/>
</dbReference>
<dbReference type="FunFam" id="3.10.410.10:FF:000001">
    <property type="entry name" value="Putative formate--tetrahydrofolate ligase"/>
    <property type="match status" value="1"/>
</dbReference>
<dbReference type="Gene3D" id="3.30.1510.10">
    <property type="entry name" value="Domain 2, N(10)-formyltetrahydrofolate synthetase"/>
    <property type="match status" value="1"/>
</dbReference>
<dbReference type="Gene3D" id="3.10.410.10">
    <property type="entry name" value="Formyltetrahydrofolate synthetase, domain 3"/>
    <property type="match status" value="1"/>
</dbReference>
<dbReference type="Gene3D" id="3.40.50.300">
    <property type="entry name" value="P-loop containing nucleotide triphosphate hydrolases"/>
    <property type="match status" value="1"/>
</dbReference>
<dbReference type="HAMAP" id="MF_01543">
    <property type="entry name" value="FTHFS"/>
    <property type="match status" value="1"/>
</dbReference>
<dbReference type="InterPro" id="IPR000559">
    <property type="entry name" value="Formate_THF_ligase"/>
</dbReference>
<dbReference type="InterPro" id="IPR020628">
    <property type="entry name" value="Formate_THF_ligase_CS"/>
</dbReference>
<dbReference type="InterPro" id="IPR027417">
    <property type="entry name" value="P-loop_NTPase"/>
</dbReference>
<dbReference type="NCBIfam" id="NF010030">
    <property type="entry name" value="PRK13505.1"/>
    <property type="match status" value="1"/>
</dbReference>
<dbReference type="Pfam" id="PF01268">
    <property type="entry name" value="FTHFS"/>
    <property type="match status" value="1"/>
</dbReference>
<dbReference type="SUPFAM" id="SSF52540">
    <property type="entry name" value="P-loop containing nucleoside triphosphate hydrolases"/>
    <property type="match status" value="1"/>
</dbReference>
<dbReference type="PROSITE" id="PS00721">
    <property type="entry name" value="FTHFS_1"/>
    <property type="match status" value="1"/>
</dbReference>
<dbReference type="PROSITE" id="PS00722">
    <property type="entry name" value="FTHFS_2"/>
    <property type="match status" value="1"/>
</dbReference>
<accession>Q97EB3</accession>
<proteinExistence type="inferred from homology"/>
<evidence type="ECO:0000255" key="1">
    <source>
        <dbReference type="HAMAP-Rule" id="MF_01543"/>
    </source>
</evidence>
<keyword id="KW-0067">ATP-binding</keyword>
<keyword id="KW-0436">Ligase</keyword>
<keyword id="KW-0547">Nucleotide-binding</keyword>
<keyword id="KW-0554">One-carbon metabolism</keyword>
<keyword id="KW-1185">Reference proteome</keyword>
<reference key="1">
    <citation type="journal article" date="2001" name="J. Bacteriol.">
        <title>Genome sequence and comparative analysis of the solvent-producing bacterium Clostridium acetobutylicum.</title>
        <authorList>
            <person name="Noelling J."/>
            <person name="Breton G."/>
            <person name="Omelchenko M.V."/>
            <person name="Makarova K.S."/>
            <person name="Zeng Q."/>
            <person name="Gibson R."/>
            <person name="Lee H.M."/>
            <person name="Dubois J."/>
            <person name="Qiu D."/>
            <person name="Hitti J."/>
            <person name="Wolf Y.I."/>
            <person name="Tatusov R.L."/>
            <person name="Sabathe F."/>
            <person name="Doucette-Stamm L.A."/>
            <person name="Soucaille P."/>
            <person name="Daly M.J."/>
            <person name="Bennett G.N."/>
            <person name="Koonin E.V."/>
            <person name="Smith D.R."/>
        </authorList>
    </citation>
    <scope>NUCLEOTIDE SEQUENCE [LARGE SCALE GENOMIC DNA]</scope>
    <source>
        <strain>ATCC 824 / DSM 792 / JCM 1419 / IAM 19013 / LMG 5710 / NBRC 13948 / NRRL B-527 / VKM B-1787 / 2291 / W</strain>
    </source>
</reference>
<feature type="chain" id="PRO_0000199337" description="Formate--tetrahydrofolate ligase">
    <location>
        <begin position="1"/>
        <end position="556"/>
    </location>
</feature>
<feature type="binding site" evidence="1">
    <location>
        <begin position="65"/>
        <end position="72"/>
    </location>
    <ligand>
        <name>ATP</name>
        <dbReference type="ChEBI" id="CHEBI:30616"/>
    </ligand>
</feature>
<name>FTHS_CLOAB</name>
<protein>
    <recommendedName>
        <fullName evidence="1">Formate--tetrahydrofolate ligase</fullName>
        <ecNumber evidence="1">6.3.4.3</ecNumber>
    </recommendedName>
    <alternativeName>
        <fullName evidence="1">Formyltetrahydrofolate synthetase</fullName>
        <shortName evidence="1">FHS</shortName>
        <shortName evidence="1">FTHFS</shortName>
    </alternativeName>
</protein>
<comment type="catalytic activity">
    <reaction evidence="1">
        <text>(6S)-5,6,7,8-tetrahydrofolate + formate + ATP = (6R)-10-formyltetrahydrofolate + ADP + phosphate</text>
        <dbReference type="Rhea" id="RHEA:20221"/>
        <dbReference type="ChEBI" id="CHEBI:15740"/>
        <dbReference type="ChEBI" id="CHEBI:30616"/>
        <dbReference type="ChEBI" id="CHEBI:43474"/>
        <dbReference type="ChEBI" id="CHEBI:57453"/>
        <dbReference type="ChEBI" id="CHEBI:195366"/>
        <dbReference type="ChEBI" id="CHEBI:456216"/>
        <dbReference type="EC" id="6.3.4.3"/>
    </reaction>
</comment>
<comment type="pathway">
    <text evidence="1">One-carbon metabolism; tetrahydrofolate interconversion.</text>
</comment>
<comment type="similarity">
    <text evidence="1">Belongs to the formate--tetrahydrofolate ligase family.</text>
</comment>